<accession>A3Q1B0</accession>
<organism>
    <name type="scientific">Mycobacterium sp. (strain JLS)</name>
    <dbReference type="NCBI Taxonomy" id="164757"/>
    <lineage>
        <taxon>Bacteria</taxon>
        <taxon>Bacillati</taxon>
        <taxon>Actinomycetota</taxon>
        <taxon>Actinomycetes</taxon>
        <taxon>Mycobacteriales</taxon>
        <taxon>Mycobacteriaceae</taxon>
        <taxon>Mycobacterium</taxon>
    </lineage>
</organism>
<proteinExistence type="inferred from homology"/>
<dbReference type="EC" id="3.6.1.31" evidence="1"/>
<dbReference type="EMBL" id="CP000580">
    <property type="protein sequence ID" value="ABN98937.1"/>
    <property type="molecule type" value="Genomic_DNA"/>
</dbReference>
<dbReference type="SMR" id="A3Q1B0"/>
<dbReference type="KEGG" id="mjl:Mjls_3158"/>
<dbReference type="HOGENOM" id="CLU_123337_2_1_11"/>
<dbReference type="BioCyc" id="MSP164757:G1G8C-3183-MONOMER"/>
<dbReference type="UniPathway" id="UPA00031">
    <property type="reaction ID" value="UER00007"/>
</dbReference>
<dbReference type="GO" id="GO:0005737">
    <property type="term" value="C:cytoplasm"/>
    <property type="evidence" value="ECO:0007669"/>
    <property type="project" value="UniProtKB-SubCell"/>
</dbReference>
<dbReference type="GO" id="GO:0005524">
    <property type="term" value="F:ATP binding"/>
    <property type="evidence" value="ECO:0007669"/>
    <property type="project" value="UniProtKB-KW"/>
</dbReference>
<dbReference type="GO" id="GO:0004636">
    <property type="term" value="F:phosphoribosyl-ATP diphosphatase activity"/>
    <property type="evidence" value="ECO:0007669"/>
    <property type="project" value="UniProtKB-UniRule"/>
</dbReference>
<dbReference type="GO" id="GO:0000105">
    <property type="term" value="P:L-histidine biosynthetic process"/>
    <property type="evidence" value="ECO:0007669"/>
    <property type="project" value="UniProtKB-UniRule"/>
</dbReference>
<dbReference type="CDD" id="cd11547">
    <property type="entry name" value="NTP-PPase_HisE"/>
    <property type="match status" value="1"/>
</dbReference>
<dbReference type="Gene3D" id="1.10.287.1080">
    <property type="entry name" value="MazG-like"/>
    <property type="match status" value="1"/>
</dbReference>
<dbReference type="HAMAP" id="MF_01020">
    <property type="entry name" value="HisE"/>
    <property type="match status" value="1"/>
</dbReference>
<dbReference type="InterPro" id="IPR008179">
    <property type="entry name" value="HisE"/>
</dbReference>
<dbReference type="InterPro" id="IPR021130">
    <property type="entry name" value="PRib-ATP_PPHydrolase-like"/>
</dbReference>
<dbReference type="NCBIfam" id="TIGR03188">
    <property type="entry name" value="histidine_hisI"/>
    <property type="match status" value="1"/>
</dbReference>
<dbReference type="NCBIfam" id="NF001610">
    <property type="entry name" value="PRK00400.1-1"/>
    <property type="match status" value="1"/>
</dbReference>
<dbReference type="PANTHER" id="PTHR42945">
    <property type="entry name" value="HISTIDINE BIOSYNTHESIS BIFUNCTIONAL PROTEIN"/>
    <property type="match status" value="1"/>
</dbReference>
<dbReference type="PANTHER" id="PTHR42945:SF1">
    <property type="entry name" value="HISTIDINE BIOSYNTHESIS BIFUNCTIONAL PROTEIN HIS7"/>
    <property type="match status" value="1"/>
</dbReference>
<dbReference type="Pfam" id="PF01503">
    <property type="entry name" value="PRA-PH"/>
    <property type="match status" value="1"/>
</dbReference>
<dbReference type="SUPFAM" id="SSF101386">
    <property type="entry name" value="all-alpha NTP pyrophosphatases"/>
    <property type="match status" value="1"/>
</dbReference>
<sequence length="93" mass="10214">MGESQPVKTFDALFDELTERARTRPEGSGTVAALDGGVHGLGKKILEEAGEVWLAAEHESDEALAEEISQLLYWTQVLMIARGLSPDDVYRKL</sequence>
<comment type="catalytic activity">
    <reaction evidence="1">
        <text>1-(5-phospho-beta-D-ribosyl)-ATP + H2O = 1-(5-phospho-beta-D-ribosyl)-5'-AMP + diphosphate + H(+)</text>
        <dbReference type="Rhea" id="RHEA:22828"/>
        <dbReference type="ChEBI" id="CHEBI:15377"/>
        <dbReference type="ChEBI" id="CHEBI:15378"/>
        <dbReference type="ChEBI" id="CHEBI:33019"/>
        <dbReference type="ChEBI" id="CHEBI:59457"/>
        <dbReference type="ChEBI" id="CHEBI:73183"/>
        <dbReference type="EC" id="3.6.1.31"/>
    </reaction>
</comment>
<comment type="pathway">
    <text evidence="1">Amino-acid biosynthesis; L-histidine biosynthesis; L-histidine from 5-phospho-alpha-D-ribose 1-diphosphate: step 2/9.</text>
</comment>
<comment type="subcellular location">
    <subcellularLocation>
        <location evidence="1">Cytoplasm</location>
    </subcellularLocation>
</comment>
<comment type="similarity">
    <text evidence="1">Belongs to the PRA-PH family.</text>
</comment>
<protein>
    <recommendedName>
        <fullName evidence="1">Phosphoribosyl-ATP pyrophosphatase</fullName>
        <shortName evidence="1">PRA-PH</shortName>
        <ecNumber evidence="1">3.6.1.31</ecNumber>
    </recommendedName>
</protein>
<feature type="chain" id="PRO_1000063357" description="Phosphoribosyl-ATP pyrophosphatase">
    <location>
        <begin position="1"/>
        <end position="93"/>
    </location>
</feature>
<keyword id="KW-0028">Amino-acid biosynthesis</keyword>
<keyword id="KW-0067">ATP-binding</keyword>
<keyword id="KW-0963">Cytoplasm</keyword>
<keyword id="KW-0368">Histidine biosynthesis</keyword>
<keyword id="KW-0378">Hydrolase</keyword>
<keyword id="KW-0547">Nucleotide-binding</keyword>
<gene>
    <name evidence="1" type="primary">hisE</name>
    <name type="ordered locus">Mjls_3158</name>
</gene>
<reference key="1">
    <citation type="submission" date="2007-02" db="EMBL/GenBank/DDBJ databases">
        <title>Complete sequence of Mycobacterium sp. JLS.</title>
        <authorList>
            <consortium name="US DOE Joint Genome Institute"/>
            <person name="Copeland A."/>
            <person name="Lucas S."/>
            <person name="Lapidus A."/>
            <person name="Barry K."/>
            <person name="Detter J.C."/>
            <person name="Glavina del Rio T."/>
            <person name="Hammon N."/>
            <person name="Israni S."/>
            <person name="Dalin E."/>
            <person name="Tice H."/>
            <person name="Pitluck S."/>
            <person name="Chain P."/>
            <person name="Malfatti S."/>
            <person name="Shin M."/>
            <person name="Vergez L."/>
            <person name="Schmutz J."/>
            <person name="Larimer F."/>
            <person name="Land M."/>
            <person name="Hauser L."/>
            <person name="Kyrpides N."/>
            <person name="Mikhailova N."/>
            <person name="Miller C.D."/>
            <person name="Anderson A.J."/>
            <person name="Sims R.C."/>
            <person name="Richardson P."/>
        </authorList>
    </citation>
    <scope>NUCLEOTIDE SEQUENCE [LARGE SCALE GENOMIC DNA]</scope>
    <source>
        <strain>JLS</strain>
    </source>
</reference>
<evidence type="ECO:0000255" key="1">
    <source>
        <dbReference type="HAMAP-Rule" id="MF_01020"/>
    </source>
</evidence>
<name>HIS2_MYCSJ</name>